<protein>
    <recommendedName>
        <fullName>Bifunctional pinoresinol-lariciresinol reductase</fullName>
        <shortName>PLR-La1</shortName>
    </recommendedName>
    <alternativeName>
        <fullName>(+)-lariciresinol reductase</fullName>
        <ecNumber>1.23.1.2</ecNumber>
    </alternativeName>
    <alternativeName>
        <fullName>(+)-pinoresinol reductase</fullName>
        <ecNumber>1.23.1.1</ecNumber>
    </alternativeName>
</protein>
<reference key="1">
    <citation type="journal article" date="2005" name="Phytochemistry">
        <title>Pinoresinol-lariciresinol reductases with different stereospecificity from Linum album and Linum usitatissimum.</title>
        <authorList>
            <person name="von Heimendahl C.B."/>
            <person name="Schafer K.M."/>
            <person name="Eklund P."/>
            <person name="Sjoholm R."/>
            <person name="Schmidt T.J."/>
            <person name="Fuss E."/>
        </authorList>
    </citation>
    <scope>NUCLEOTIDE SEQUENCE [MRNA]</scope>
    <scope>FUNCTION</scope>
    <scope>CATALYTIC ACTIVITY</scope>
    <scope>MUTAGENESIS OF MET-143; GLY-282; TYR-286 AND VAL-318</scope>
</reference>
<reference key="2">
    <citation type="submission" date="2009-10" db="EMBL/GenBank/DDBJ databases">
        <title>Coloning of PLR gene in Linum album.</title>
        <authorList>
            <person name="Ahmadian Chashmi N."/>
            <person name="Tahsili J."/>
            <person name="Yousefzadi M."/>
            <person name="Sharifi M."/>
            <person name="Behmanesh M."/>
        </authorList>
    </citation>
    <scope>NUCLEOTIDE SEQUENCE [MRNA]</scope>
</reference>
<reference key="3">
    <citation type="journal article" date="2010" name="Biotechnol. Lett.">
        <title>Salicylic acid improves podophyllotoxin production in cell cultures of Linum album by increasing the expression of genes related with its biosynthesis.</title>
        <authorList>
            <person name="Yousefzadi M."/>
            <person name="Sharifi M."/>
            <person name="Behmanesh M."/>
            <person name="Ghasempour A."/>
            <person name="Moyano E."/>
            <person name="Palazon J."/>
        </authorList>
    </citation>
    <scope>INDUCTION BY SALICYLIC ACID</scope>
</reference>
<reference key="4">
    <citation type="journal article" date="2012" name="J. Plant Physiol.">
        <title>Time-course changes in fungal elicitor-induced lignan synthesis and expression of the relevant genes in cell cultures of Linum album.</title>
        <authorList>
            <person name="Esmaeilzadeh Bahabadi S."/>
            <person name="Sharifi M."/>
            <person name="Behmanesh M."/>
            <person name="Safaie N."/>
            <person name="Murata J."/>
            <person name="Araki R."/>
            <person name="Yamagaki T."/>
            <person name="Satake H."/>
        </authorList>
    </citation>
    <scope>INDUCTION BY ELICITOR</scope>
</reference>
<reference key="5">
    <citation type="journal article" date="2012" name="Plant Physiol. Biochem.">
        <title>The effect of light on gene expression and podophyllotoxin biosynthesis in Linum album cell culture.</title>
        <authorList>
            <person name="Yousefzadi M."/>
            <person name="Sharifi M."/>
            <person name="Behmanesh M."/>
            <person name="Ghasempour A."/>
            <person name="Moyano E."/>
            <person name="Palazon J."/>
        </authorList>
    </citation>
    <scope>INDUCTION BY BLUE LIGHT</scope>
</reference>
<comment type="function">
    <text evidence="3">Reductase involved in lignan biosynthesis. Catalyzes the enantioselective conversion of (+)-pinoresinol into (+)-lariciresinol and of (+)-lariciresinol into (-)-secoisolariciresinol. Abstracts the 4R-hydride from the NADPH cofactor during catalysis.</text>
</comment>
<comment type="catalytic activity">
    <reaction evidence="3">
        <text>(+)-lariciresinol + NADP(+) = (+)-pinoresinol + NADPH + H(+)</text>
        <dbReference type="Rhea" id="RHEA:34419"/>
        <dbReference type="ChEBI" id="CHEBI:40"/>
        <dbReference type="ChEBI" id="CHEBI:15378"/>
        <dbReference type="ChEBI" id="CHEBI:57783"/>
        <dbReference type="ChEBI" id="CHEBI:58349"/>
        <dbReference type="ChEBI" id="CHEBI:67246"/>
        <dbReference type="EC" id="1.23.1.1"/>
    </reaction>
</comment>
<comment type="catalytic activity">
    <reaction evidence="3">
        <text>(-)-secoisolariciresinol + NADP(+) = (+)-lariciresinol + NADPH + H(+)</text>
        <dbReference type="Rhea" id="RHEA:34423"/>
        <dbReference type="ChEBI" id="CHEBI:15378"/>
        <dbReference type="ChEBI" id="CHEBI:57783"/>
        <dbReference type="ChEBI" id="CHEBI:58349"/>
        <dbReference type="ChEBI" id="CHEBI:65004"/>
        <dbReference type="ChEBI" id="CHEBI:67246"/>
        <dbReference type="EC" id="1.23.1.2"/>
    </reaction>
</comment>
<comment type="subunit">
    <text evidence="1">Dimer.</text>
</comment>
<comment type="induction">
    <text evidence="4 5 6">Up-regulated by continuous blue light and fungal elicitor treatment. Not regulated by salicylic acid.</text>
</comment>
<comment type="similarity">
    <text evidence="7">Belongs to the NmrA-type oxidoreductase family. Isoflavone reductase subfamily.</text>
</comment>
<organism>
    <name type="scientific">Linum album</name>
    <name type="common">Flax</name>
    <dbReference type="NCBI Taxonomy" id="191219"/>
    <lineage>
        <taxon>Eukaryota</taxon>
        <taxon>Viridiplantae</taxon>
        <taxon>Streptophyta</taxon>
        <taxon>Embryophyta</taxon>
        <taxon>Tracheophyta</taxon>
        <taxon>Spermatophyta</taxon>
        <taxon>Magnoliopsida</taxon>
        <taxon>eudicotyledons</taxon>
        <taxon>Gunneridae</taxon>
        <taxon>Pentapetalae</taxon>
        <taxon>rosids</taxon>
        <taxon>fabids</taxon>
        <taxon>Malpighiales</taxon>
        <taxon>Linaceae</taxon>
        <taxon>Linum</taxon>
    </lineage>
</organism>
<proteinExistence type="evidence at protein level"/>
<gene>
    <name type="primary">PLR1</name>
</gene>
<sequence length="326" mass="36379">MGSLGKVNNEIPTKSSGGSKVLVIGGTGYLGKRLVKASLDSGHDTYVMHRPEIGVDIEKVQLLLSFKMQGAHLVSASFDDQRSLVDAVKLVDVVICAISGVHIRSHQILLQLKLVEAIKEAGNVKRFVPSEFGTDPARMENAMEPGRITFDDKMVVRRAIEEAGIPFTYVSANCFAGYFLGGLCQPGYILPSRDHVTLLGDGDKKGVYVDEDDTAAYTLRAIDDPRTLNKTIYVKPPKNVLSQREVVGIWEKYIGKELQKTILSEQDFLATMREQNYAEQVGLTHYYHVCYEGCLSNFEVDDEQEASKLYPDVHYTTVEEYLKRYV</sequence>
<evidence type="ECO:0000250" key="1"/>
<evidence type="ECO:0000250" key="2">
    <source>
        <dbReference type="UniProtKB" id="Q9LD14"/>
    </source>
</evidence>
<evidence type="ECO:0000269" key="3">
    <source>
    </source>
</evidence>
<evidence type="ECO:0000269" key="4">
    <source>
    </source>
</evidence>
<evidence type="ECO:0000269" key="5">
    <source>
    </source>
</evidence>
<evidence type="ECO:0000269" key="6">
    <source>
    </source>
</evidence>
<evidence type="ECO:0000305" key="7"/>
<name>PILR1_LINAL</name>
<accession>Q4R0I0</accession>
<accession>D2KYC2</accession>
<dbReference type="EC" id="1.23.1.2"/>
<dbReference type="EC" id="1.23.1.1"/>
<dbReference type="EMBL" id="AJ849358">
    <property type="protein sequence ID" value="CAH60857.1"/>
    <property type="molecule type" value="mRNA"/>
</dbReference>
<dbReference type="EMBL" id="AB525816">
    <property type="protein sequence ID" value="BAI66418.1"/>
    <property type="molecule type" value="mRNA"/>
</dbReference>
<dbReference type="SMR" id="Q4R0I0"/>
<dbReference type="BRENDA" id="1.23.1.1">
    <property type="organism ID" value="13208"/>
</dbReference>
<dbReference type="BRENDA" id="1.23.1.2">
    <property type="organism ID" value="13208"/>
</dbReference>
<dbReference type="GO" id="GO:0010284">
    <property type="term" value="F:lariciresinol reductase activity"/>
    <property type="evidence" value="ECO:0000314"/>
    <property type="project" value="UniProtKB"/>
</dbReference>
<dbReference type="GO" id="GO:0010283">
    <property type="term" value="F:pinoresinol reductase activity"/>
    <property type="evidence" value="ECO:0000314"/>
    <property type="project" value="UniProtKB"/>
</dbReference>
<dbReference type="GO" id="GO:1902131">
    <property type="term" value="P:(+)-lariciresinol catabolic process"/>
    <property type="evidence" value="ECO:0000314"/>
    <property type="project" value="UniProtKB"/>
</dbReference>
<dbReference type="GO" id="GO:1902125">
    <property type="term" value="P:(+)-pinoresinol catabolic process"/>
    <property type="evidence" value="ECO:0000314"/>
    <property type="project" value="UniProtKB"/>
</dbReference>
<dbReference type="GO" id="GO:1902129">
    <property type="term" value="P:(-)-lariciresinol biosynthetic process"/>
    <property type="evidence" value="ECO:0000314"/>
    <property type="project" value="UniProtKB"/>
</dbReference>
<dbReference type="GO" id="GO:1902138">
    <property type="term" value="P:(-)-secoisolariciresinol biosynthetic process"/>
    <property type="evidence" value="ECO:0000314"/>
    <property type="project" value="UniProtKB"/>
</dbReference>
<dbReference type="GO" id="GO:0009807">
    <property type="term" value="P:lignan biosynthetic process"/>
    <property type="evidence" value="ECO:0000314"/>
    <property type="project" value="UniProtKB"/>
</dbReference>
<dbReference type="CDD" id="cd05259">
    <property type="entry name" value="PCBER_SDR_a"/>
    <property type="match status" value="1"/>
</dbReference>
<dbReference type="Gene3D" id="3.40.50.720">
    <property type="entry name" value="NAD(P)-binding Rossmann-like Domain"/>
    <property type="match status" value="1"/>
</dbReference>
<dbReference type="Gene3D" id="3.90.25.10">
    <property type="entry name" value="UDP-galactose 4-epimerase, domain 1"/>
    <property type="match status" value="1"/>
</dbReference>
<dbReference type="InterPro" id="IPR036291">
    <property type="entry name" value="NAD(P)-bd_dom_sf"/>
</dbReference>
<dbReference type="InterPro" id="IPR008030">
    <property type="entry name" value="NmrA-like"/>
</dbReference>
<dbReference type="InterPro" id="IPR050608">
    <property type="entry name" value="NmrA-type/Isoflavone_red_sf"/>
</dbReference>
<dbReference type="InterPro" id="IPR045312">
    <property type="entry name" value="PCBER-like"/>
</dbReference>
<dbReference type="PANTHER" id="PTHR43349:SF47">
    <property type="entry name" value="NMRA-LIKE DOMAIN-CONTAINING PROTEIN"/>
    <property type="match status" value="1"/>
</dbReference>
<dbReference type="PANTHER" id="PTHR43349">
    <property type="entry name" value="PINORESINOL REDUCTASE-RELATED"/>
    <property type="match status" value="1"/>
</dbReference>
<dbReference type="Pfam" id="PF05368">
    <property type="entry name" value="NmrA"/>
    <property type="match status" value="1"/>
</dbReference>
<dbReference type="SUPFAM" id="SSF51735">
    <property type="entry name" value="NAD(P)-binding Rossmann-fold domains"/>
    <property type="match status" value="1"/>
</dbReference>
<feature type="initiator methionine" description="Removed" evidence="1">
    <location>
        <position position="1"/>
    </location>
</feature>
<feature type="chain" id="PRO_0000422939" description="Bifunctional pinoresinol-lariciresinol reductase">
    <location>
        <begin position="2"/>
        <end position="326"/>
    </location>
</feature>
<feature type="active site" description="Proton acceptor" evidence="2">
    <location>
        <position position="153"/>
    </location>
</feature>
<feature type="binding site" evidence="2">
    <location>
        <begin position="25"/>
        <end position="31"/>
    </location>
    <ligand>
        <name>NADP(+)</name>
        <dbReference type="ChEBI" id="CHEBI:58349"/>
    </ligand>
</feature>
<feature type="binding site" evidence="2">
    <location>
        <position position="50"/>
    </location>
    <ligand>
        <name>NADP(+)</name>
        <dbReference type="ChEBI" id="CHEBI:58349"/>
    </ligand>
</feature>
<feature type="binding site" evidence="2">
    <location>
        <position position="59"/>
    </location>
    <ligand>
        <name>NADP(+)</name>
        <dbReference type="ChEBI" id="CHEBI:58349"/>
    </ligand>
</feature>
<feature type="binding site" evidence="2">
    <location>
        <position position="157"/>
    </location>
    <ligand>
        <name>NADP(+)</name>
        <dbReference type="ChEBI" id="CHEBI:58349"/>
    </ligand>
</feature>
<feature type="binding site" evidence="2">
    <location>
        <position position="285"/>
    </location>
    <ligand>
        <name>substrate</name>
    </ligand>
</feature>
<feature type="mutagenesis site" description="No effect on enantiospecificity; when associated with V-282; L-286 and M-318." evidence="3">
    <original>M</original>
    <variation>L</variation>
    <location>
        <position position="143"/>
    </location>
</feature>
<feature type="mutagenesis site" description="No effect on enantiospecificity; when associated with L-286. No effect on enantiospecificity; when associated with L-143; L-286 and M-318." evidence="3">
    <original>G</original>
    <variation>V</variation>
    <location>
        <position position="282"/>
    </location>
</feature>
<feature type="mutagenesis site" description="No effect on enantiospecificity; when associated with V-282. No effect on enantiospecificity; when associated with L-143; V-282 and M-318." evidence="3">
    <original>Y</original>
    <variation>L</variation>
    <location>
        <position position="286"/>
    </location>
</feature>
<feature type="mutagenesis site" description="No effect on enantiospecificity; when associated with L-143; V-282 and L-286." evidence="3">
    <original>V</original>
    <variation>M</variation>
    <location>
        <position position="318"/>
    </location>
</feature>
<feature type="sequence conflict" description="In Ref. 2; BAI66418." evidence="7" ref="2">
    <original>Y</original>
    <variation>H</variation>
    <location>
        <position position="233"/>
    </location>
</feature>
<keyword id="KW-0521">NADP</keyword>
<keyword id="KW-0560">Oxidoreductase</keyword>